<proteinExistence type="evidence at protein level"/>
<reference evidence="10 11" key="1">
    <citation type="journal article" date="1998" name="Mol. Cell">
        <title>SAP30, a novel protein conserved between human and yeast, is a component of a histone deacetylase complex.</title>
        <authorList>
            <person name="Zhang Y."/>
            <person name="Sun Z.-W."/>
            <person name="Iratni R."/>
            <person name="Erdjument-Bromage H."/>
            <person name="Tempst P."/>
            <person name="Hampsey M."/>
            <person name="Reinberg D."/>
        </authorList>
    </citation>
    <scope>NUCLEOTIDE SEQUENCE [MRNA]</scope>
    <scope>FUNCTION</scope>
    <scope>INTERACTION WITH HDAC1</scope>
    <source>
        <tissue>Cervix carcinoma</tissue>
    </source>
</reference>
<reference evidence="10" key="2">
    <citation type="journal article" date="1998" name="Mol. Cell">
        <title>SAP30, a component of the mSin3 corepressor complex involved in N-CoR-mediated repression by specific transcription factors.</title>
        <authorList>
            <person name="Laherty C.D."/>
            <person name="Billin A.N."/>
            <person name="Lavinsky R.M."/>
            <person name="Yochum G.S."/>
            <person name="Bush A.C."/>
            <person name="Sun J.-M."/>
            <person name="Mullen T.-M."/>
            <person name="Davie J.R."/>
            <person name="Rose D.W."/>
            <person name="Glass C.K."/>
            <person name="Rosenfeld M.G."/>
            <person name="Ayer D.E."/>
            <person name="Eisenman R.N."/>
        </authorList>
    </citation>
    <scope>NUCLEOTIDE SEQUENCE [MRNA]</scope>
    <scope>TISSUE SPECIFICITY</scope>
</reference>
<reference key="3">
    <citation type="submission" date="2005-09" db="EMBL/GenBank/DDBJ databases">
        <authorList>
            <person name="Mural R.J."/>
            <person name="Istrail S."/>
            <person name="Sutton G.G."/>
            <person name="Florea L."/>
            <person name="Halpern A.L."/>
            <person name="Mobarry C.M."/>
            <person name="Lippert R."/>
            <person name="Walenz B."/>
            <person name="Shatkay H."/>
            <person name="Dew I."/>
            <person name="Miller J.R."/>
            <person name="Flanigan M.J."/>
            <person name="Edwards N.J."/>
            <person name="Bolanos R."/>
            <person name="Fasulo D."/>
            <person name="Halldorsson B.V."/>
            <person name="Hannenhalli S."/>
            <person name="Turner R."/>
            <person name="Yooseph S."/>
            <person name="Lu F."/>
            <person name="Nusskern D.R."/>
            <person name="Shue B.C."/>
            <person name="Zheng X.H."/>
            <person name="Zhong F."/>
            <person name="Delcher A.L."/>
            <person name="Huson D.H."/>
            <person name="Kravitz S.A."/>
            <person name="Mouchard L."/>
            <person name="Reinert K."/>
            <person name="Remington K.A."/>
            <person name="Clark A.G."/>
            <person name="Waterman M.S."/>
            <person name="Eichler E.E."/>
            <person name="Adams M.D."/>
            <person name="Hunkapiller M.W."/>
            <person name="Myers E.W."/>
            <person name="Venter J.C."/>
        </authorList>
    </citation>
    <scope>NUCLEOTIDE SEQUENCE [LARGE SCALE GENOMIC DNA]</scope>
</reference>
<reference evidence="12" key="4">
    <citation type="journal article" date="2004" name="Genome Res.">
        <title>The status, quality, and expansion of the NIH full-length cDNA project: the Mammalian Gene Collection (MGC).</title>
        <authorList>
            <consortium name="The MGC Project Team"/>
        </authorList>
    </citation>
    <scope>NUCLEOTIDE SEQUENCE [LARGE SCALE MRNA]</scope>
    <source>
        <tissue evidence="12">Brain</tissue>
    </source>
</reference>
<reference evidence="10" key="5">
    <citation type="journal article" date="2003" name="Genes Dev.">
        <title>Human Sin3 deacetylase and trithorax-related Set1/Ash2 histone H3-K4 methyltransferase are tethered together selectively by the cell-proliferation factor HCF-1.</title>
        <authorList>
            <person name="Wysocka J."/>
            <person name="Myers M.P."/>
            <person name="Laherty C.D."/>
            <person name="Eisenman R.N."/>
            <person name="Herr W."/>
        </authorList>
    </citation>
    <scope>INTERACTION WITH HCFC1</scope>
</reference>
<reference key="6">
    <citation type="journal article" date="2004" name="J. Biochem.">
        <title>HTRP -- an immediate-early gene product induced by HSV1 infection in human embryo fibroblasts, is involved in cellular co-repressors.</title>
        <authorList>
            <person name="Li J.-F."/>
            <person name="Liu L.-D."/>
            <person name="Ma S.-H."/>
            <person name="Che Y.-C."/>
            <person name="Wang L.-C."/>
            <person name="Dong C.-H."/>
            <person name="Zhao H.-L."/>
            <person name="Liao Y."/>
            <person name="Li Q.-H."/>
        </authorList>
    </citation>
    <scope>INTERACTION WITH SAP30BP</scope>
</reference>
<reference key="7">
    <citation type="journal article" date="2006" name="Cell">
        <title>Global, in vivo, and site-specific phosphorylation dynamics in signaling networks.</title>
        <authorList>
            <person name="Olsen J.V."/>
            <person name="Blagoev B."/>
            <person name="Gnad F."/>
            <person name="Macek B."/>
            <person name="Kumar C."/>
            <person name="Mortensen P."/>
            <person name="Mann M."/>
        </authorList>
    </citation>
    <scope>PHOSPHORYLATION [LARGE SCALE ANALYSIS] AT SER-131 AND SER-138</scope>
    <scope>IDENTIFICATION BY MASS SPECTROMETRY [LARGE SCALE ANALYSIS]</scope>
    <source>
        <tissue>Cervix carcinoma</tissue>
    </source>
</reference>
<reference key="8">
    <citation type="journal article" date="2008" name="Proc. Natl. Acad. Sci. U.S.A.">
        <title>A quantitative atlas of mitotic phosphorylation.</title>
        <authorList>
            <person name="Dephoure N."/>
            <person name="Zhou C."/>
            <person name="Villen J."/>
            <person name="Beausoleil S.A."/>
            <person name="Bakalarski C.E."/>
            <person name="Elledge S.J."/>
            <person name="Gygi S.P."/>
        </authorList>
    </citation>
    <scope>PHOSPHORYLATION [LARGE SCALE ANALYSIS] AT SER-131; SER-138 AND THR-145</scope>
    <scope>IDENTIFICATION BY MASS SPECTROMETRY [LARGE SCALE ANALYSIS]</scope>
    <source>
        <tissue>Cervix carcinoma</tissue>
    </source>
</reference>
<reference key="9">
    <citation type="journal article" date="2009" name="Sci. Signal.">
        <title>Quantitative phosphoproteomic analysis of T cell receptor signaling reveals system-wide modulation of protein-protein interactions.</title>
        <authorList>
            <person name="Mayya V."/>
            <person name="Lundgren D.H."/>
            <person name="Hwang S.-I."/>
            <person name="Rezaul K."/>
            <person name="Wu L."/>
            <person name="Eng J.K."/>
            <person name="Rodionov V."/>
            <person name="Han D.K."/>
        </authorList>
    </citation>
    <scope>PHOSPHORYLATION [LARGE SCALE ANALYSIS] AT SER-131 AND SER-138</scope>
    <scope>IDENTIFICATION BY MASS SPECTROMETRY [LARGE SCALE ANALYSIS]</scope>
    <source>
        <tissue>Leukemic T-cell</tissue>
    </source>
</reference>
<reference key="10">
    <citation type="journal article" date="2010" name="Sci. Signal.">
        <title>Quantitative phosphoproteomics reveals widespread full phosphorylation site occupancy during mitosis.</title>
        <authorList>
            <person name="Olsen J.V."/>
            <person name="Vermeulen M."/>
            <person name="Santamaria A."/>
            <person name="Kumar C."/>
            <person name="Miller M.L."/>
            <person name="Jensen L.J."/>
            <person name="Gnad F."/>
            <person name="Cox J."/>
            <person name="Jensen T.S."/>
            <person name="Nigg E.A."/>
            <person name="Brunak S."/>
            <person name="Mann M."/>
        </authorList>
    </citation>
    <scope>PHOSPHORYLATION [LARGE SCALE ANALYSIS] AT SER-131</scope>
    <scope>IDENTIFICATION BY MASS SPECTROMETRY [LARGE SCALE ANALYSIS]</scope>
    <source>
        <tissue>Cervix carcinoma</tissue>
    </source>
</reference>
<reference key="11">
    <citation type="journal article" date="2010" name="Virol. Sin.">
        <title>Transcriptional regulation by HSV-1 induced HTRP via acetylation system.</title>
        <authorList>
            <person name="Chen J."/>
            <person name="Li Y.M."/>
            <person name="Li J.F."/>
            <person name="Liu L.D."/>
            <person name="Liao Y."/>
            <person name="Na R.X."/>
            <person name="Wang J.J."/>
            <person name="Wang L.C."/>
            <person name="Li Q.H."/>
        </authorList>
    </citation>
    <scope>FUNCTION (MICROBIAL INFECTION)</scope>
</reference>
<reference key="12">
    <citation type="journal article" date="2011" name="Sci. Signal.">
        <title>System-wide temporal characterization of the proteome and phosphoproteome of human embryonic stem cell differentiation.</title>
        <authorList>
            <person name="Rigbolt K.T."/>
            <person name="Prokhorova T.A."/>
            <person name="Akimov V."/>
            <person name="Henningsen J."/>
            <person name="Johansen P.T."/>
            <person name="Kratchmarova I."/>
            <person name="Kassem M."/>
            <person name="Mann M."/>
            <person name="Olsen J.V."/>
            <person name="Blagoev B."/>
        </authorList>
    </citation>
    <scope>PHOSPHORYLATION [LARGE SCALE ANALYSIS] AT SER-131 AND SER-138</scope>
    <scope>IDENTIFICATION BY MASS SPECTROMETRY [LARGE SCALE ANALYSIS]</scope>
</reference>
<reference key="13">
    <citation type="journal article" date="2012" name="Proc. Natl. Acad. Sci. U.S.A.">
        <title>N-terminal acetylome analyses and functional insights of the N-terminal acetyltransferase NatB.</title>
        <authorList>
            <person name="Van Damme P."/>
            <person name="Lasa M."/>
            <person name="Polevoda B."/>
            <person name="Gazquez C."/>
            <person name="Elosegui-Artola A."/>
            <person name="Kim D.S."/>
            <person name="De Juan-Pardo E."/>
            <person name="Demeyer K."/>
            <person name="Hole K."/>
            <person name="Larrea E."/>
            <person name="Timmerman E."/>
            <person name="Prieto J."/>
            <person name="Arnesen T."/>
            <person name="Sherman F."/>
            <person name="Gevaert K."/>
            <person name="Aldabe R."/>
        </authorList>
    </citation>
    <scope>IDENTIFICATION BY MASS SPECTROMETRY [LARGE SCALE ANALYSIS]</scope>
</reference>
<reference key="14">
    <citation type="journal article" date="2013" name="J. Proteome Res.">
        <title>Toward a comprehensive characterization of a human cancer cell phosphoproteome.</title>
        <authorList>
            <person name="Zhou H."/>
            <person name="Di Palma S."/>
            <person name="Preisinger C."/>
            <person name="Peng M."/>
            <person name="Polat A.N."/>
            <person name="Heck A.J."/>
            <person name="Mohammed S."/>
        </authorList>
    </citation>
    <scope>PHOSPHORYLATION [LARGE SCALE ANALYSIS] AT THR-5</scope>
    <scope>IDENTIFICATION BY MASS SPECTROMETRY [LARGE SCALE ANALYSIS]</scope>
    <source>
        <tissue>Erythroleukemia</tissue>
    </source>
</reference>
<reference key="15">
    <citation type="journal article" date="2014" name="J. Proteomics">
        <title>An enzyme assisted RP-RPLC approach for in-depth analysis of human liver phosphoproteome.</title>
        <authorList>
            <person name="Bian Y."/>
            <person name="Song C."/>
            <person name="Cheng K."/>
            <person name="Dong M."/>
            <person name="Wang F."/>
            <person name="Huang J."/>
            <person name="Sun D."/>
            <person name="Wang L."/>
            <person name="Ye M."/>
            <person name="Zou H."/>
        </authorList>
    </citation>
    <scope>IDENTIFICATION BY MASS SPECTROMETRY [LARGE SCALE ANALYSIS]</scope>
    <source>
        <tissue>Liver</tissue>
    </source>
</reference>
<reference key="16">
    <citation type="journal article" date="2015" name="Mol. Cell. Proteomics">
        <title>System-wide analysis of SUMOylation dynamics in response to replication stress reveals novel small ubiquitin-like modified target proteins and acceptor lysines relevant for genome stability.</title>
        <authorList>
            <person name="Xiao Z."/>
            <person name="Chang J.G."/>
            <person name="Hendriks I.A."/>
            <person name="Sigurdsson J.O."/>
            <person name="Olsen J.V."/>
            <person name="Vertegaal A.C."/>
        </authorList>
    </citation>
    <scope>SUMOYLATION [LARGE SCALE ANALYSIS] AT LYS-214</scope>
    <scope>IDENTIFICATION BY MASS SPECTROMETRY [LARGE SCALE ANALYSIS]</scope>
</reference>
<reference key="17">
    <citation type="journal article" date="2017" name="Nat. Struct. Mol. Biol.">
        <title>Site-specific mapping of the human SUMO proteome reveals co-modification with phosphorylation.</title>
        <authorList>
            <person name="Hendriks I.A."/>
            <person name="Lyon D."/>
            <person name="Young C."/>
            <person name="Jensen L.J."/>
            <person name="Vertegaal A.C."/>
            <person name="Nielsen M.L."/>
        </authorList>
    </citation>
    <scope>SUMOYLATION [LARGE SCALE ANALYSIS] AT LYS-87; LYS-194; LYS-205 AND LYS-214</scope>
    <scope>IDENTIFICATION BY MASS SPECTROMETRY [LARGE SCALE ANALYSIS]</scope>
</reference>
<reference key="18">
    <citation type="journal article" date="2009" name="Nucleic Acids Res.">
        <title>Solution structure of a novel zinc finger motif in the SAP30 polypeptide of the Sin3 corepressor complex and its potential role in nucleic acid recognition.</title>
        <authorList>
            <person name="He Y."/>
            <person name="Imhoff R."/>
            <person name="Sahu A."/>
            <person name="Radhakrishnan I."/>
        </authorList>
    </citation>
    <scope>STRUCTURE BY NMR OF 64-131</scope>
    <scope>DNA-BINDING</scope>
    <scope>ZINC-FINGER</scope>
    <scope>MUTAGENESIS OF CYS-67; CYS-68; HIS-108 AND CYS-112</scope>
</reference>
<organism>
    <name type="scientific">Homo sapiens</name>
    <name type="common">Human</name>
    <dbReference type="NCBI Taxonomy" id="9606"/>
    <lineage>
        <taxon>Eukaryota</taxon>
        <taxon>Metazoa</taxon>
        <taxon>Chordata</taxon>
        <taxon>Craniata</taxon>
        <taxon>Vertebrata</taxon>
        <taxon>Euteleostomi</taxon>
        <taxon>Mammalia</taxon>
        <taxon>Eutheria</taxon>
        <taxon>Euarchontoglires</taxon>
        <taxon>Primates</taxon>
        <taxon>Haplorrhini</taxon>
        <taxon>Catarrhini</taxon>
        <taxon>Hominidae</taxon>
        <taxon>Homo</taxon>
    </lineage>
</organism>
<comment type="function">
    <text evidence="2 8">Involved in the functional recruitment of the Sin3-histone deacetylase complex (HDAC) to a specific subset of N-CoR corepressor complexes. Capable of transcription repression by N-CoR. Active in deacetylating core histone octamers (when in a complex) but inactive in deacetylating nucleosomal histones.</text>
</comment>
<comment type="function">
    <text evidence="7">(Microbial infection) Involved in transcriptional repression of HHV-1 genes TK and gC.</text>
</comment>
<comment type="subunit">
    <text evidence="2 4 5 8">Component of the histone deacetylase complex that includes at least SIN3A, HDAC1 and HDAC2 (By similarity). Found in a complex composed of at least SINHCAF, SIN3A, HDAC1, SAP30, RBBP4, OGT and TET1 (By similarity). Interacts with HDAC1 (PubMed:9651585). Interacts with SIN3A, SIN3B, HDAC2, RBBP4 and NCOR1 (By similarity). Interacts with SAMSN1 (By similarity). Interacts with HCFC1 (PubMed:12670868). Interacts with SAP30BP (PubMed:15496587).</text>
</comment>
<comment type="interaction">
    <interactant intactId="EBI-632609">
        <id>O75446</id>
    </interactant>
    <interactant intactId="EBI-21535880">
        <id>Q92870-2</id>
        <label>APBB2</label>
    </interactant>
    <organismsDiffer>false</organismsDiffer>
    <experiments>3</experiments>
</comment>
<comment type="interaction">
    <interactant intactId="EBI-632609">
        <id>O75446</id>
    </interactant>
    <interactant intactId="EBI-747185">
        <id>O95817</id>
        <label>BAG3</label>
    </interactant>
    <organismsDiffer>false</organismsDiffer>
    <experiments>3</experiments>
</comment>
<comment type="interaction">
    <interactant intactId="EBI-632609">
        <id>O75446</id>
    </interactant>
    <interactant intactId="EBI-750300">
        <id>Q01658</id>
        <label>DR1</label>
    </interactant>
    <organismsDiffer>false</organismsDiffer>
    <experiments>3</experiments>
</comment>
<comment type="interaction">
    <interactant intactId="EBI-632609">
        <id>O75446</id>
    </interactant>
    <interactant intactId="EBI-21603100">
        <id>P26378-2</id>
        <label>ELAVL4</label>
    </interactant>
    <organismsDiffer>false</organismsDiffer>
    <experiments>3</experiments>
</comment>
<comment type="interaction">
    <interactant intactId="EBI-632609">
        <id>O75446</id>
    </interactant>
    <interactant intactId="EBI-389564">
        <id>Q00403</id>
        <label>GTF2B</label>
    </interactant>
    <organismsDiffer>false</organismsDiffer>
    <experiments>3</experiments>
</comment>
<comment type="interaction">
    <interactant intactId="EBI-632609">
        <id>O75446</id>
    </interactant>
    <interactant intactId="EBI-1054873">
        <id>Q9Y5Q9</id>
        <label>GTF3C3</label>
    </interactant>
    <organismsDiffer>false</organismsDiffer>
    <experiments>3</experiments>
</comment>
<comment type="interaction">
    <interactant intactId="EBI-632609">
        <id>O75446</id>
    </interactant>
    <interactant intactId="EBI-466029">
        <id>P42858</id>
        <label>HTT</label>
    </interactant>
    <organismsDiffer>false</organismsDiffer>
    <experiments>3</experiments>
</comment>
<comment type="interaction">
    <interactant intactId="EBI-632609">
        <id>O75446</id>
    </interactant>
    <interactant intactId="EBI-716486">
        <id>Q92597</id>
        <label>NDRG1</label>
    </interactant>
    <organismsDiffer>false</organismsDiffer>
    <experiments>3</experiments>
</comment>
<comment type="interaction">
    <interactant intactId="EBI-632609">
        <id>O75446</id>
    </interactant>
    <interactant intactId="EBI-473160">
        <id>Q8N2W9</id>
        <label>PIAS4</label>
    </interactant>
    <organismsDiffer>false</organismsDiffer>
    <experiments>3</experiments>
</comment>
<comment type="interaction">
    <interactant intactId="EBI-632609">
        <id>O75446</id>
    </interactant>
    <interactant intactId="EBI-985879">
        <id>P37840</id>
        <label>SNCA</label>
    </interactant>
    <organismsDiffer>false</organismsDiffer>
    <experiments>3</experiments>
</comment>
<comment type="subcellular location">
    <subcellularLocation>
        <location>Nucleus</location>
    </subcellularLocation>
</comment>
<comment type="tissue specificity">
    <text evidence="9">Expressed in all tissues tested with highest levels in pancreas, ovary, PBL, spleen and thymus; lowest levels in brain, placenta, lung and kidney.</text>
</comment>
<comment type="similarity">
    <text evidence="10">Belongs to the SAP30 family.</text>
</comment>
<protein>
    <recommendedName>
        <fullName>Histone deacetylase complex subunit SAP30</fullName>
    </recommendedName>
    <alternativeName>
        <fullName>30 kDa Sin3-associated polypeptide</fullName>
    </alternativeName>
    <alternativeName>
        <fullName>Sin3 corepressor complex subunit SAP30</fullName>
    </alternativeName>
    <alternativeName>
        <fullName>Sin3-associated polypeptide p30</fullName>
    </alternativeName>
</protein>
<evidence type="ECO:0000250" key="1"/>
<evidence type="ECO:0000250" key="2">
    <source>
        <dbReference type="UniProtKB" id="O88574"/>
    </source>
</evidence>
<evidence type="ECO:0000256" key="3">
    <source>
        <dbReference type="SAM" id="MobiDB-lite"/>
    </source>
</evidence>
<evidence type="ECO:0000269" key="4">
    <source>
    </source>
</evidence>
<evidence type="ECO:0000269" key="5">
    <source>
    </source>
</evidence>
<evidence type="ECO:0000269" key="6">
    <source>
    </source>
</evidence>
<evidence type="ECO:0000269" key="7">
    <source>
    </source>
</evidence>
<evidence type="ECO:0000269" key="8">
    <source>
    </source>
</evidence>
<evidence type="ECO:0000269" key="9">
    <source>
    </source>
</evidence>
<evidence type="ECO:0000305" key="10"/>
<evidence type="ECO:0000312" key="11">
    <source>
        <dbReference type="EMBL" id="AAC33316.1"/>
    </source>
</evidence>
<evidence type="ECO:0000312" key="12">
    <source>
        <dbReference type="EMBL" id="AAH16757.1"/>
    </source>
</evidence>
<evidence type="ECO:0000312" key="13">
    <source>
        <dbReference type="HGNC" id="HGNC:10532"/>
    </source>
</evidence>
<evidence type="ECO:0007744" key="14">
    <source>
    </source>
</evidence>
<evidence type="ECO:0007744" key="15">
    <source>
    </source>
</evidence>
<evidence type="ECO:0007744" key="16">
    <source>
    </source>
</evidence>
<evidence type="ECO:0007744" key="17">
    <source>
    </source>
</evidence>
<evidence type="ECO:0007744" key="18">
    <source>
    </source>
</evidence>
<evidence type="ECO:0007744" key="19">
    <source>
    </source>
</evidence>
<evidence type="ECO:0007744" key="20">
    <source>
    </source>
</evidence>
<evidence type="ECO:0007744" key="21">
    <source>
    </source>
</evidence>
<evidence type="ECO:0007829" key="22">
    <source>
        <dbReference type="PDB" id="2KDP"/>
    </source>
</evidence>
<accession>O75446</accession>
<accession>D3DP38</accession>
<keyword id="KW-0002">3D-structure</keyword>
<keyword id="KW-0238">DNA-binding</keyword>
<keyword id="KW-1017">Isopeptide bond</keyword>
<keyword id="KW-0479">Metal-binding</keyword>
<keyword id="KW-0539">Nucleus</keyword>
<keyword id="KW-0597">Phosphoprotein</keyword>
<keyword id="KW-1267">Proteomics identification</keyword>
<keyword id="KW-1185">Reference proteome</keyword>
<keyword id="KW-0678">Repressor</keyword>
<keyword id="KW-0804">Transcription</keyword>
<keyword id="KW-0805">Transcription regulation</keyword>
<keyword id="KW-0832">Ubl conjugation</keyword>
<keyword id="KW-0862">Zinc</keyword>
<keyword id="KW-0863">Zinc-finger</keyword>
<dbReference type="EMBL" id="AF055993">
    <property type="protein sequence ID" value="AAC33316.1"/>
    <property type="molecule type" value="mRNA"/>
</dbReference>
<dbReference type="EMBL" id="CH471056">
    <property type="protein sequence ID" value="EAX04755.1"/>
    <property type="molecule type" value="Genomic_DNA"/>
</dbReference>
<dbReference type="EMBL" id="CH471056">
    <property type="protein sequence ID" value="EAX04756.1"/>
    <property type="molecule type" value="Genomic_DNA"/>
</dbReference>
<dbReference type="EMBL" id="BC016757">
    <property type="protein sequence ID" value="AAH16757.1"/>
    <property type="molecule type" value="mRNA"/>
</dbReference>
<dbReference type="CCDS" id="CCDS3817.1"/>
<dbReference type="RefSeq" id="NP_003855.1">
    <property type="nucleotide sequence ID" value="NM_003864.4"/>
</dbReference>
<dbReference type="PDB" id="2KDP">
    <property type="method" value="NMR"/>
    <property type="chains" value="A=64-131"/>
</dbReference>
<dbReference type="PDBsum" id="2KDP"/>
<dbReference type="SMR" id="O75446"/>
<dbReference type="BioGRID" id="114346">
    <property type="interactions" value="162"/>
</dbReference>
<dbReference type="ComplexPortal" id="CPX-3321">
    <property type="entry name" value="SIN3A histone deacetylase complex"/>
</dbReference>
<dbReference type="ComplexPortal" id="CPX-3322">
    <property type="entry name" value="SIN3B histone deacetylase complex"/>
</dbReference>
<dbReference type="ComplexPortal" id="CPX-3323">
    <property type="entry name" value="SIN3A histone deacetylase complex, ES cell-specific variant"/>
</dbReference>
<dbReference type="CORUM" id="O75446"/>
<dbReference type="DIP" id="DIP-33328N"/>
<dbReference type="FunCoup" id="O75446">
    <property type="interactions" value="2116"/>
</dbReference>
<dbReference type="IntAct" id="O75446">
    <property type="interactions" value="74"/>
</dbReference>
<dbReference type="MINT" id="O75446"/>
<dbReference type="STRING" id="9606.ENSP00000296504"/>
<dbReference type="CarbonylDB" id="O75446"/>
<dbReference type="GlyConnect" id="787">
    <property type="glycosylation" value="2 N-Linked glycans (2 sites)"/>
</dbReference>
<dbReference type="GlyCosmos" id="O75446">
    <property type="glycosylation" value="2 sites, 3 glycans"/>
</dbReference>
<dbReference type="GlyGen" id="O75446">
    <property type="glycosylation" value="3 sites, 3 N-linked glycans (2 sites), 1 O-linked glycan (1 site)"/>
</dbReference>
<dbReference type="iPTMnet" id="O75446"/>
<dbReference type="PhosphoSitePlus" id="O75446"/>
<dbReference type="BioMuta" id="SAP30"/>
<dbReference type="jPOST" id="O75446"/>
<dbReference type="MassIVE" id="O75446"/>
<dbReference type="PaxDb" id="9606-ENSP00000296504"/>
<dbReference type="PeptideAtlas" id="O75446"/>
<dbReference type="ProteomicsDB" id="50014"/>
<dbReference type="Pumba" id="O75446"/>
<dbReference type="Antibodypedia" id="17174">
    <property type="antibodies" value="184 antibodies from 28 providers"/>
</dbReference>
<dbReference type="DNASU" id="8819"/>
<dbReference type="Ensembl" id="ENST00000296504.4">
    <property type="protein sequence ID" value="ENSP00000296504.3"/>
    <property type="gene ID" value="ENSG00000164105.4"/>
</dbReference>
<dbReference type="GeneID" id="8819"/>
<dbReference type="KEGG" id="hsa:8819"/>
<dbReference type="MANE-Select" id="ENST00000296504.4">
    <property type="protein sequence ID" value="ENSP00000296504.3"/>
    <property type="RefSeq nucleotide sequence ID" value="NM_003864.4"/>
    <property type="RefSeq protein sequence ID" value="NP_003855.1"/>
</dbReference>
<dbReference type="UCSC" id="uc003itd.4">
    <property type="organism name" value="human"/>
</dbReference>
<dbReference type="AGR" id="HGNC:10532"/>
<dbReference type="CTD" id="8819"/>
<dbReference type="DisGeNET" id="8819"/>
<dbReference type="GeneCards" id="SAP30"/>
<dbReference type="HGNC" id="HGNC:10532">
    <property type="gene designation" value="SAP30"/>
</dbReference>
<dbReference type="HPA" id="ENSG00000164105">
    <property type="expression patterns" value="Low tissue specificity"/>
</dbReference>
<dbReference type="MIM" id="603378">
    <property type="type" value="gene"/>
</dbReference>
<dbReference type="neXtProt" id="NX_O75446"/>
<dbReference type="OpenTargets" id="ENSG00000164105"/>
<dbReference type="PharmGKB" id="PA34941"/>
<dbReference type="VEuPathDB" id="HostDB:ENSG00000164105"/>
<dbReference type="eggNOG" id="ENOG502QWFH">
    <property type="taxonomic scope" value="Eukaryota"/>
</dbReference>
<dbReference type="GeneTree" id="ENSGT00390000006633"/>
<dbReference type="HOGENOM" id="CLU_097961_0_0_1"/>
<dbReference type="InParanoid" id="O75446"/>
<dbReference type="OMA" id="DEYRICC"/>
<dbReference type="OrthoDB" id="510958at2759"/>
<dbReference type="PAN-GO" id="O75446">
    <property type="GO annotations" value="3 GO annotations based on evolutionary models"/>
</dbReference>
<dbReference type="PhylomeDB" id="O75446"/>
<dbReference type="TreeFam" id="TF324135"/>
<dbReference type="PathwayCommons" id="O75446"/>
<dbReference type="Reactome" id="R-HSA-3214815">
    <property type="pathway name" value="HDACs deacetylate histones"/>
</dbReference>
<dbReference type="Reactome" id="R-HSA-427413">
    <property type="pathway name" value="NoRC negatively regulates rRNA expression"/>
</dbReference>
<dbReference type="Reactome" id="R-HSA-9679191">
    <property type="pathway name" value="Potential therapeutics for SARS"/>
</dbReference>
<dbReference type="SignaLink" id="O75446"/>
<dbReference type="BioGRID-ORCS" id="8819">
    <property type="hits" value="16 hits in 1158 CRISPR screens"/>
</dbReference>
<dbReference type="EvolutionaryTrace" id="O75446"/>
<dbReference type="GeneWiki" id="SAP30"/>
<dbReference type="GenomeRNAi" id="8819"/>
<dbReference type="Pharos" id="O75446">
    <property type="development level" value="Tbio"/>
</dbReference>
<dbReference type="PRO" id="PR:O75446"/>
<dbReference type="Proteomes" id="UP000005640">
    <property type="component" value="Chromosome 4"/>
</dbReference>
<dbReference type="RNAct" id="O75446">
    <property type="molecule type" value="protein"/>
</dbReference>
<dbReference type="Bgee" id="ENSG00000164105">
    <property type="expression patterns" value="Expressed in secondary oocyte and 183 other cell types or tissues"/>
</dbReference>
<dbReference type="GO" id="GO:0000118">
    <property type="term" value="C:histone deacetylase complex"/>
    <property type="evidence" value="ECO:0000314"/>
    <property type="project" value="UniProtKB"/>
</dbReference>
<dbReference type="GO" id="GO:0005654">
    <property type="term" value="C:nucleoplasm"/>
    <property type="evidence" value="ECO:0000314"/>
    <property type="project" value="HPA"/>
</dbReference>
<dbReference type="GO" id="GO:0005634">
    <property type="term" value="C:nucleus"/>
    <property type="evidence" value="ECO:0000303"/>
    <property type="project" value="ComplexPortal"/>
</dbReference>
<dbReference type="GO" id="GO:0070822">
    <property type="term" value="C:Sin3-type complex"/>
    <property type="evidence" value="ECO:0000303"/>
    <property type="project" value="ComplexPortal"/>
</dbReference>
<dbReference type="GO" id="GO:0003677">
    <property type="term" value="F:DNA binding"/>
    <property type="evidence" value="ECO:0007669"/>
    <property type="project" value="UniProtKB-KW"/>
</dbReference>
<dbReference type="GO" id="GO:0003712">
    <property type="term" value="F:transcription coregulator activity"/>
    <property type="evidence" value="ECO:0000318"/>
    <property type="project" value="GO_Central"/>
</dbReference>
<dbReference type="GO" id="GO:0003714">
    <property type="term" value="F:transcription corepressor activity"/>
    <property type="evidence" value="ECO:0000314"/>
    <property type="project" value="UniProtKB"/>
</dbReference>
<dbReference type="GO" id="GO:0008270">
    <property type="term" value="F:zinc ion binding"/>
    <property type="evidence" value="ECO:0007669"/>
    <property type="project" value="UniProtKB-KW"/>
</dbReference>
<dbReference type="GO" id="GO:0030336">
    <property type="term" value="P:negative regulation of cell migration"/>
    <property type="evidence" value="ECO:0000303"/>
    <property type="project" value="ComplexPortal"/>
</dbReference>
<dbReference type="GO" id="GO:1902455">
    <property type="term" value="P:negative regulation of stem cell population maintenance"/>
    <property type="evidence" value="ECO:0000303"/>
    <property type="project" value="ComplexPortal"/>
</dbReference>
<dbReference type="GO" id="GO:0000122">
    <property type="term" value="P:negative regulation of transcription by RNA polymerase II"/>
    <property type="evidence" value="ECO:0000314"/>
    <property type="project" value="UniProtKB"/>
</dbReference>
<dbReference type="GO" id="GO:0030512">
    <property type="term" value="P:negative regulation of transforming growth factor beta receptor signaling pathway"/>
    <property type="evidence" value="ECO:0000303"/>
    <property type="project" value="ComplexPortal"/>
</dbReference>
<dbReference type="GO" id="GO:1902459">
    <property type="term" value="P:positive regulation of stem cell population maintenance"/>
    <property type="evidence" value="ECO:0000303"/>
    <property type="project" value="ComplexPortal"/>
</dbReference>
<dbReference type="GO" id="GO:0006355">
    <property type="term" value="P:regulation of DNA-templated transcription"/>
    <property type="evidence" value="ECO:0000318"/>
    <property type="project" value="GO_Central"/>
</dbReference>
<dbReference type="GO" id="GO:0035914">
    <property type="term" value="P:skeletal muscle cell differentiation"/>
    <property type="evidence" value="ECO:0007669"/>
    <property type="project" value="Ensembl"/>
</dbReference>
<dbReference type="Gene3D" id="6.10.160.20">
    <property type="match status" value="1"/>
</dbReference>
<dbReference type="InterPro" id="IPR024145">
    <property type="entry name" value="His_deAcase_SAP30/SAP30L"/>
</dbReference>
<dbReference type="InterPro" id="IPR038291">
    <property type="entry name" value="SAP30_C_sf"/>
</dbReference>
<dbReference type="InterPro" id="IPR025718">
    <property type="entry name" value="SAP30_Sin3-bd"/>
</dbReference>
<dbReference type="InterPro" id="IPR025717">
    <property type="entry name" value="SAP30_zn-finger"/>
</dbReference>
<dbReference type="PANTHER" id="PTHR13286:SF7">
    <property type="entry name" value="HISTONE DEACETYLASE COMPLEX SUBUNIT SAP30"/>
    <property type="match status" value="1"/>
</dbReference>
<dbReference type="PANTHER" id="PTHR13286">
    <property type="entry name" value="SAP30"/>
    <property type="match status" value="1"/>
</dbReference>
<dbReference type="Pfam" id="PF13867">
    <property type="entry name" value="SAP30_Sin3_bdg"/>
    <property type="match status" value="1"/>
</dbReference>
<dbReference type="Pfam" id="PF13866">
    <property type="entry name" value="zf-SAP30"/>
    <property type="match status" value="1"/>
</dbReference>
<sequence length="220" mass="23306">MNGFTPDEMSRGGDAAAAVAAVVAAAAAAASAGNGTGAGTGAEVPGAGAVSAAGPPGAAGPGPGQLCCLREDGERCGRAAGNASFSKRIQKSISQKKVKIELDKSARHLYICDYHKNLIQSVRNRRKRKGSDDDGGDSPVQDIDTPEVDLYQLQVNTLRRYKRHFKLPTRPGLNKAQLVEIVGCHFRSIPVNEKDTLTYFIYSVKNDKNKSDLKVDSGVH</sequence>
<gene>
    <name evidence="13" type="primary">SAP30</name>
</gene>
<feature type="chain" id="PRO_0000097582" description="Histone deacetylase complex subunit SAP30">
    <location>
        <begin position="1"/>
        <end position="220"/>
    </location>
</feature>
<feature type="zinc finger region" description="Atypical">
    <location>
        <begin position="67"/>
        <end position="115"/>
    </location>
</feature>
<feature type="region of interest" description="Interaction with NCOR1" evidence="1">
    <location>
        <begin position="1"/>
        <end position="129"/>
    </location>
</feature>
<feature type="region of interest" description="Disordered" evidence="3">
    <location>
        <begin position="123"/>
        <end position="143"/>
    </location>
</feature>
<feature type="region of interest" description="Interaction with SIN3A" evidence="1">
    <location>
        <begin position="130"/>
        <end position="220"/>
    </location>
</feature>
<feature type="modified residue" description="Phosphothreonine" evidence="19">
    <location>
        <position position="5"/>
    </location>
</feature>
<feature type="modified residue" description="Phosphoserine" evidence="14 15 16 17 18">
    <location>
        <position position="131"/>
    </location>
</feature>
<feature type="modified residue" description="Phosphoserine" evidence="14 15 16 18">
    <location>
        <position position="138"/>
    </location>
</feature>
<feature type="modified residue" description="Phosphothreonine" evidence="15">
    <location>
        <position position="145"/>
    </location>
</feature>
<feature type="cross-link" description="Glycyl lysine isopeptide (Lys-Gly) (interchain with G-Cter in SUMO2)" evidence="21">
    <location>
        <position position="87"/>
    </location>
</feature>
<feature type="cross-link" description="Glycyl lysine isopeptide (Lys-Gly) (interchain with G-Cter in SUMO2)" evidence="21">
    <location>
        <position position="194"/>
    </location>
</feature>
<feature type="cross-link" description="Glycyl lysine isopeptide (Lys-Gly) (interchain with G-Cter in SUMO2)" evidence="21">
    <location>
        <position position="205"/>
    </location>
</feature>
<feature type="cross-link" description="Glycyl lysine isopeptide (Lys-Gly) (interchain with G-Cter in SUMO2)" evidence="20 21">
    <location>
        <position position="214"/>
    </location>
</feature>
<feature type="mutagenesis site" description="Abolishes zinc-binding." evidence="6">
    <original>C</original>
    <variation>A</variation>
    <location>
        <position position="67"/>
    </location>
</feature>
<feature type="mutagenesis site" description="Retains zinc-binding." evidence="6">
    <original>C</original>
    <variation>A</variation>
    <location>
        <position position="68"/>
    </location>
</feature>
<feature type="mutagenesis site" description="Retains zinc-binding." evidence="6">
    <original>H</original>
    <variation>A</variation>
    <location>
        <position position="108"/>
    </location>
</feature>
<feature type="mutagenesis site" description="Abolishes zinc-binding." evidence="6">
    <original>C</original>
    <variation>A</variation>
    <location>
        <position position="112"/>
    </location>
</feature>
<feature type="strand" evidence="22">
    <location>
        <begin position="64"/>
        <end position="66"/>
    </location>
</feature>
<feature type="strand" evidence="22">
    <location>
        <begin position="69"/>
        <end position="71"/>
    </location>
</feature>
<feature type="helix" evidence="22">
    <location>
        <begin position="87"/>
        <end position="96"/>
    </location>
</feature>
<feature type="strand" evidence="22">
    <location>
        <begin position="99"/>
        <end position="102"/>
    </location>
</feature>
<feature type="helix" evidence="22">
    <location>
        <begin position="113"/>
        <end position="120"/>
    </location>
</feature>
<feature type="strand" evidence="22">
    <location>
        <begin position="123"/>
        <end position="125"/>
    </location>
</feature>
<name>SAP30_HUMAN</name>